<reference key="1">
    <citation type="journal article" date="2007" name="Mol. Biol. Evol.">
        <title>The complete chloroplast and mitochondrial DNA sequence of Ostreococcus tauri: organelle genomes of the smallest eukaryote are examples of compaction.</title>
        <authorList>
            <person name="Robbens S."/>
            <person name="Derelle E."/>
            <person name="Ferraz C."/>
            <person name="Wuyts J."/>
            <person name="Moreau H."/>
            <person name="Van de Peer Y."/>
        </authorList>
    </citation>
    <scope>NUCLEOTIDE SEQUENCE [LARGE SCALE GENOMIC DNA]</scope>
    <source>
        <strain>OTTH0595</strain>
    </source>
</reference>
<sequence>MASNRELIEMEGVVVESLPNAMFQVELENGFQVLAHISGKIRRNSIKILLGDRVTVELTPYDLTKGRIIYRLRKDRTQ</sequence>
<organism>
    <name type="scientific">Ostreococcus tauri</name>
    <dbReference type="NCBI Taxonomy" id="70448"/>
    <lineage>
        <taxon>Eukaryota</taxon>
        <taxon>Viridiplantae</taxon>
        <taxon>Chlorophyta</taxon>
        <taxon>Mamiellophyceae</taxon>
        <taxon>Mamiellales</taxon>
        <taxon>Bathycoccaceae</taxon>
        <taxon>Ostreococcus</taxon>
    </lineage>
</organism>
<name>IF1C_OSTTA</name>
<keyword id="KW-0150">Chloroplast</keyword>
<keyword id="KW-0396">Initiation factor</keyword>
<keyword id="KW-0934">Plastid</keyword>
<keyword id="KW-0648">Protein biosynthesis</keyword>
<keyword id="KW-1185">Reference proteome</keyword>
<keyword id="KW-0694">RNA-binding</keyword>
<keyword id="KW-0699">rRNA-binding</keyword>
<accession>Q0P3L2</accession>
<comment type="function">
    <text evidence="1">One of the essential components for the initiation of protein synthesis. Stabilizes the binding of IF-2 and IF-3 on the 30S subunit to which N-formylmethionyl-tRNA(fMet) subsequently binds. Helps modulate mRNA selection, yielding the 30S pre-initiation complex (PIC). Upon addition of the 50S ribosomal subunit IF-1, IF-2 and IF-3 are released leaving the mature 70S translation initiation complex.</text>
</comment>
<comment type="subunit">
    <text evidence="1">Component of the 30S ribosomal translation pre-initiation complex which assembles on the 30S ribosome in the order IF-2 and IF-3, IF-1 and N-formylmethionyl-tRNA(fMet); mRNA recruitment can occur at any time during PIC assembly.</text>
</comment>
<comment type="subcellular location">
    <subcellularLocation>
        <location evidence="1">Plastid</location>
        <location evidence="1">Chloroplast</location>
    </subcellularLocation>
</comment>
<comment type="similarity">
    <text evidence="1">Belongs to the IF-1 family.</text>
</comment>
<evidence type="ECO:0000255" key="1">
    <source>
        <dbReference type="HAMAP-Rule" id="MF_00075"/>
    </source>
</evidence>
<protein>
    <recommendedName>
        <fullName evidence="1">Translation initiation factor IF-1, chloroplastic</fullName>
    </recommendedName>
</protein>
<feature type="chain" id="PRO_0000275395" description="Translation initiation factor IF-1, chloroplastic">
    <location>
        <begin position="1"/>
        <end position="78"/>
    </location>
</feature>
<feature type="domain" description="S1-like" evidence="1">
    <location>
        <begin position="1"/>
        <end position="73"/>
    </location>
</feature>
<dbReference type="EMBL" id="CR954199">
    <property type="protein sequence ID" value="CAL36365.1"/>
    <property type="molecule type" value="Genomic_DNA"/>
</dbReference>
<dbReference type="RefSeq" id="YP_717243.1">
    <property type="nucleotide sequence ID" value="NC_008289.1"/>
</dbReference>
<dbReference type="SMR" id="Q0P3L2"/>
<dbReference type="STRING" id="70448.Q0P3L2"/>
<dbReference type="GeneID" id="4238827"/>
<dbReference type="KEGG" id="ota:OstapCp40"/>
<dbReference type="eggNOG" id="ENOG502S8M9">
    <property type="taxonomic scope" value="Eukaryota"/>
</dbReference>
<dbReference type="InParanoid" id="Q0P3L2"/>
<dbReference type="Proteomes" id="UP000009170">
    <property type="component" value="Chloroplast"/>
</dbReference>
<dbReference type="GO" id="GO:0009507">
    <property type="term" value="C:chloroplast"/>
    <property type="evidence" value="ECO:0007669"/>
    <property type="project" value="UniProtKB-SubCell"/>
</dbReference>
<dbReference type="GO" id="GO:0005829">
    <property type="term" value="C:cytosol"/>
    <property type="evidence" value="ECO:0007669"/>
    <property type="project" value="TreeGrafter"/>
</dbReference>
<dbReference type="GO" id="GO:0043022">
    <property type="term" value="F:ribosome binding"/>
    <property type="evidence" value="ECO:0007669"/>
    <property type="project" value="UniProtKB-UniRule"/>
</dbReference>
<dbReference type="GO" id="GO:0019843">
    <property type="term" value="F:rRNA binding"/>
    <property type="evidence" value="ECO:0007669"/>
    <property type="project" value="UniProtKB-UniRule"/>
</dbReference>
<dbReference type="GO" id="GO:0003743">
    <property type="term" value="F:translation initiation factor activity"/>
    <property type="evidence" value="ECO:0007669"/>
    <property type="project" value="UniProtKB-UniRule"/>
</dbReference>
<dbReference type="CDD" id="cd04451">
    <property type="entry name" value="S1_IF1"/>
    <property type="match status" value="1"/>
</dbReference>
<dbReference type="FunFam" id="2.40.50.140:FF:000002">
    <property type="entry name" value="Translation initiation factor IF-1"/>
    <property type="match status" value="1"/>
</dbReference>
<dbReference type="Gene3D" id="2.40.50.140">
    <property type="entry name" value="Nucleic acid-binding proteins"/>
    <property type="match status" value="1"/>
</dbReference>
<dbReference type="HAMAP" id="MF_00075">
    <property type="entry name" value="IF_1"/>
    <property type="match status" value="1"/>
</dbReference>
<dbReference type="InterPro" id="IPR012340">
    <property type="entry name" value="NA-bd_OB-fold"/>
</dbReference>
<dbReference type="InterPro" id="IPR006196">
    <property type="entry name" value="RNA-binding_domain_S1_IF1"/>
</dbReference>
<dbReference type="InterPro" id="IPR003029">
    <property type="entry name" value="S1_domain"/>
</dbReference>
<dbReference type="InterPro" id="IPR004368">
    <property type="entry name" value="TIF_IF1"/>
</dbReference>
<dbReference type="NCBIfam" id="TIGR00008">
    <property type="entry name" value="infA"/>
    <property type="match status" value="1"/>
</dbReference>
<dbReference type="PANTHER" id="PTHR33370">
    <property type="entry name" value="TRANSLATION INITIATION FACTOR IF-1, CHLOROPLASTIC"/>
    <property type="match status" value="1"/>
</dbReference>
<dbReference type="PANTHER" id="PTHR33370:SF1">
    <property type="entry name" value="TRANSLATION INITIATION FACTOR IF-1, CHLOROPLASTIC"/>
    <property type="match status" value="1"/>
</dbReference>
<dbReference type="Pfam" id="PF01176">
    <property type="entry name" value="eIF-1a"/>
    <property type="match status" value="1"/>
</dbReference>
<dbReference type="SMART" id="SM00316">
    <property type="entry name" value="S1"/>
    <property type="match status" value="1"/>
</dbReference>
<dbReference type="SUPFAM" id="SSF50249">
    <property type="entry name" value="Nucleic acid-binding proteins"/>
    <property type="match status" value="1"/>
</dbReference>
<dbReference type="PROSITE" id="PS50832">
    <property type="entry name" value="S1_IF1_TYPE"/>
    <property type="match status" value="1"/>
</dbReference>
<geneLocation type="chloroplast"/>
<proteinExistence type="inferred from homology"/>
<gene>
    <name evidence="1" type="primary">infA</name>
    <name type="ordered locus">OtCpg00400</name>
</gene>